<comment type="catalytic activity">
    <reaction evidence="1">
        <text>thymidine + ATP = dTMP + ADP + H(+)</text>
        <dbReference type="Rhea" id="RHEA:19129"/>
        <dbReference type="ChEBI" id="CHEBI:15378"/>
        <dbReference type="ChEBI" id="CHEBI:17748"/>
        <dbReference type="ChEBI" id="CHEBI:30616"/>
        <dbReference type="ChEBI" id="CHEBI:63528"/>
        <dbReference type="ChEBI" id="CHEBI:456216"/>
        <dbReference type="EC" id="2.7.1.21"/>
    </reaction>
</comment>
<comment type="subunit">
    <text evidence="1">Homotetramer.</text>
</comment>
<comment type="subcellular location">
    <subcellularLocation>
        <location evidence="1">Cytoplasm</location>
    </subcellularLocation>
</comment>
<comment type="similarity">
    <text evidence="1">Belongs to the thymidine kinase family.</text>
</comment>
<feature type="chain" id="PRO_0000174960" description="Thymidine kinase">
    <location>
        <begin position="1"/>
        <end position="195"/>
    </location>
</feature>
<feature type="active site" description="Proton acceptor" evidence="1">
    <location>
        <position position="89"/>
    </location>
</feature>
<feature type="binding site" evidence="1">
    <location>
        <begin position="15"/>
        <end position="22"/>
    </location>
    <ligand>
        <name>ATP</name>
        <dbReference type="ChEBI" id="CHEBI:30616"/>
    </ligand>
</feature>
<feature type="binding site" evidence="1">
    <location>
        <begin position="88"/>
        <end position="91"/>
    </location>
    <ligand>
        <name>ATP</name>
        <dbReference type="ChEBI" id="CHEBI:30616"/>
    </ligand>
</feature>
<feature type="binding site" evidence="1">
    <location>
        <position position="145"/>
    </location>
    <ligand>
        <name>Zn(2+)</name>
        <dbReference type="ChEBI" id="CHEBI:29105"/>
    </ligand>
</feature>
<feature type="binding site" evidence="1">
    <location>
        <position position="148"/>
    </location>
    <ligand>
        <name>Zn(2+)</name>
        <dbReference type="ChEBI" id="CHEBI:29105"/>
    </ligand>
</feature>
<feature type="binding site" evidence="1">
    <location>
        <position position="183"/>
    </location>
    <ligand>
        <name>Zn(2+)</name>
        <dbReference type="ChEBI" id="CHEBI:29105"/>
    </ligand>
</feature>
<feature type="binding site" evidence="1">
    <location>
        <position position="186"/>
    </location>
    <ligand>
        <name>Zn(2+)</name>
        <dbReference type="ChEBI" id="CHEBI:29105"/>
    </ligand>
</feature>
<proteinExistence type="inferred from homology"/>
<dbReference type="EC" id="2.7.1.21" evidence="1"/>
<dbReference type="EMBL" id="AE017355">
    <property type="protein sequence ID" value="AAT62617.1"/>
    <property type="molecule type" value="Genomic_DNA"/>
</dbReference>
<dbReference type="RefSeq" id="WP_000280862.1">
    <property type="nucleotide sequence ID" value="NC_005957.1"/>
</dbReference>
<dbReference type="RefSeq" id="YP_039323.1">
    <property type="nucleotide sequence ID" value="NC_005957.1"/>
</dbReference>
<dbReference type="SMR" id="Q6HAV3"/>
<dbReference type="KEGG" id="btk:BT9727_5014"/>
<dbReference type="PATRIC" id="fig|281309.8.peg.5332"/>
<dbReference type="HOGENOM" id="CLU_064400_3_0_9"/>
<dbReference type="Proteomes" id="UP000001301">
    <property type="component" value="Chromosome"/>
</dbReference>
<dbReference type="GO" id="GO:0005829">
    <property type="term" value="C:cytosol"/>
    <property type="evidence" value="ECO:0007669"/>
    <property type="project" value="TreeGrafter"/>
</dbReference>
<dbReference type="GO" id="GO:0005524">
    <property type="term" value="F:ATP binding"/>
    <property type="evidence" value="ECO:0007669"/>
    <property type="project" value="UniProtKB-UniRule"/>
</dbReference>
<dbReference type="GO" id="GO:0004797">
    <property type="term" value="F:thymidine kinase activity"/>
    <property type="evidence" value="ECO:0007669"/>
    <property type="project" value="UniProtKB-UniRule"/>
</dbReference>
<dbReference type="GO" id="GO:0008270">
    <property type="term" value="F:zinc ion binding"/>
    <property type="evidence" value="ECO:0007669"/>
    <property type="project" value="UniProtKB-UniRule"/>
</dbReference>
<dbReference type="GO" id="GO:0071897">
    <property type="term" value="P:DNA biosynthetic process"/>
    <property type="evidence" value="ECO:0007669"/>
    <property type="project" value="UniProtKB-KW"/>
</dbReference>
<dbReference type="GO" id="GO:0046104">
    <property type="term" value="P:thymidine metabolic process"/>
    <property type="evidence" value="ECO:0007669"/>
    <property type="project" value="TreeGrafter"/>
</dbReference>
<dbReference type="FunFam" id="3.30.60.20:FF:000026">
    <property type="entry name" value="Thymidine kinase"/>
    <property type="match status" value="1"/>
</dbReference>
<dbReference type="FunFam" id="3.40.50.300:FF:000384">
    <property type="entry name" value="Thymidine kinase"/>
    <property type="match status" value="1"/>
</dbReference>
<dbReference type="Gene3D" id="3.30.60.20">
    <property type="match status" value="1"/>
</dbReference>
<dbReference type="Gene3D" id="3.40.50.300">
    <property type="entry name" value="P-loop containing nucleotide triphosphate hydrolases"/>
    <property type="match status" value="1"/>
</dbReference>
<dbReference type="HAMAP" id="MF_00124">
    <property type="entry name" value="Thymidine_kinase"/>
    <property type="match status" value="1"/>
</dbReference>
<dbReference type="InterPro" id="IPR027417">
    <property type="entry name" value="P-loop_NTPase"/>
</dbReference>
<dbReference type="InterPro" id="IPR001267">
    <property type="entry name" value="Thymidine_kinase"/>
</dbReference>
<dbReference type="InterPro" id="IPR020633">
    <property type="entry name" value="Thymidine_kinase_CS"/>
</dbReference>
<dbReference type="NCBIfam" id="NF003296">
    <property type="entry name" value="PRK04296.1-1"/>
    <property type="match status" value="1"/>
</dbReference>
<dbReference type="PANTHER" id="PTHR11441">
    <property type="entry name" value="THYMIDINE KINASE"/>
    <property type="match status" value="1"/>
</dbReference>
<dbReference type="PANTHER" id="PTHR11441:SF0">
    <property type="entry name" value="THYMIDINE KINASE, CYTOSOLIC"/>
    <property type="match status" value="1"/>
</dbReference>
<dbReference type="Pfam" id="PF00265">
    <property type="entry name" value="TK"/>
    <property type="match status" value="1"/>
</dbReference>
<dbReference type="PIRSF" id="PIRSF035805">
    <property type="entry name" value="TK_cell"/>
    <property type="match status" value="1"/>
</dbReference>
<dbReference type="SUPFAM" id="SSF57716">
    <property type="entry name" value="Glucocorticoid receptor-like (DNA-binding domain)"/>
    <property type="match status" value="1"/>
</dbReference>
<dbReference type="SUPFAM" id="SSF52540">
    <property type="entry name" value="P-loop containing nucleoside triphosphate hydrolases"/>
    <property type="match status" value="1"/>
</dbReference>
<dbReference type="PROSITE" id="PS00603">
    <property type="entry name" value="TK_CELLULAR_TYPE"/>
    <property type="match status" value="1"/>
</dbReference>
<accession>Q6HAV3</accession>
<reference key="1">
    <citation type="journal article" date="2006" name="J. Bacteriol.">
        <title>Pathogenomic sequence analysis of Bacillus cereus and Bacillus thuringiensis isolates closely related to Bacillus anthracis.</title>
        <authorList>
            <person name="Han C.S."/>
            <person name="Xie G."/>
            <person name="Challacombe J.F."/>
            <person name="Altherr M.R."/>
            <person name="Bhotika S.S."/>
            <person name="Bruce D."/>
            <person name="Campbell C.S."/>
            <person name="Campbell M.L."/>
            <person name="Chen J."/>
            <person name="Chertkov O."/>
            <person name="Cleland C."/>
            <person name="Dimitrijevic M."/>
            <person name="Doggett N.A."/>
            <person name="Fawcett J.J."/>
            <person name="Glavina T."/>
            <person name="Goodwin L.A."/>
            <person name="Hill K.K."/>
            <person name="Hitchcock P."/>
            <person name="Jackson P.J."/>
            <person name="Keim P."/>
            <person name="Kewalramani A.R."/>
            <person name="Longmire J."/>
            <person name="Lucas S."/>
            <person name="Malfatti S."/>
            <person name="McMurry K."/>
            <person name="Meincke L.J."/>
            <person name="Misra M."/>
            <person name="Moseman B.L."/>
            <person name="Mundt M."/>
            <person name="Munk A.C."/>
            <person name="Okinaka R.T."/>
            <person name="Parson-Quintana B."/>
            <person name="Reilly L.P."/>
            <person name="Richardson P."/>
            <person name="Robinson D.L."/>
            <person name="Rubin E."/>
            <person name="Saunders E."/>
            <person name="Tapia R."/>
            <person name="Tesmer J.G."/>
            <person name="Thayer N."/>
            <person name="Thompson L.S."/>
            <person name="Tice H."/>
            <person name="Ticknor L.O."/>
            <person name="Wills P.L."/>
            <person name="Brettin T.S."/>
            <person name="Gilna P."/>
        </authorList>
    </citation>
    <scope>NUCLEOTIDE SEQUENCE [LARGE SCALE GENOMIC DNA]</scope>
    <source>
        <strain>97-27</strain>
    </source>
</reference>
<organism>
    <name type="scientific">Bacillus thuringiensis subsp. konkukian (strain 97-27)</name>
    <dbReference type="NCBI Taxonomy" id="281309"/>
    <lineage>
        <taxon>Bacteria</taxon>
        <taxon>Bacillati</taxon>
        <taxon>Bacillota</taxon>
        <taxon>Bacilli</taxon>
        <taxon>Bacillales</taxon>
        <taxon>Bacillaceae</taxon>
        <taxon>Bacillus</taxon>
        <taxon>Bacillus cereus group</taxon>
    </lineage>
</organism>
<gene>
    <name evidence="1" type="primary">tdk</name>
    <name type="ordered locus">BT9727_5014</name>
</gene>
<keyword id="KW-0067">ATP-binding</keyword>
<keyword id="KW-0963">Cytoplasm</keyword>
<keyword id="KW-0237">DNA synthesis</keyword>
<keyword id="KW-0418">Kinase</keyword>
<keyword id="KW-0479">Metal-binding</keyword>
<keyword id="KW-0547">Nucleotide-binding</keyword>
<keyword id="KW-0808">Transferase</keyword>
<keyword id="KW-0862">Zinc</keyword>
<name>KITH_BACHK</name>
<sequence length="195" mass="21716">MYLINQNGWIEVICGSMFSGKSEELIRRVRRTQFAKQHAIVFKPCIDNRYSEEDVVSHNGLKVKAVPVSASKDIFEHITEEMDVIAIDEVQFFDGDIVEVVQVLANRGYRVIVAGLDQDFRGLPFGQVPQLMAIAEHVTKLQAVCSACGSPASRTQRLIDGEPAAFDDPIILVGASESYEPRCRHCHAVPTNKDK</sequence>
<evidence type="ECO:0000255" key="1">
    <source>
        <dbReference type="HAMAP-Rule" id="MF_00124"/>
    </source>
</evidence>
<protein>
    <recommendedName>
        <fullName evidence="1">Thymidine kinase</fullName>
        <ecNumber evidence="1">2.7.1.21</ecNumber>
    </recommendedName>
</protein>